<name>GGGPS_THESM</name>
<evidence type="ECO:0000255" key="1">
    <source>
        <dbReference type="HAMAP-Rule" id="MF_00112"/>
    </source>
</evidence>
<feature type="chain" id="PRO_1000202948" description="Geranylgeranylglyceryl phosphate synthase">
    <location>
        <begin position="1"/>
        <end position="255"/>
    </location>
</feature>
<feature type="binding site" evidence="1">
    <location>
        <position position="26"/>
    </location>
    <ligand>
        <name>Mg(2+)</name>
        <dbReference type="ChEBI" id="CHEBI:18420"/>
    </ligand>
</feature>
<feature type="binding site" evidence="1">
    <location>
        <position position="55"/>
    </location>
    <ligand>
        <name>Mg(2+)</name>
        <dbReference type="ChEBI" id="CHEBI:18420"/>
    </ligand>
</feature>
<feature type="binding site" evidence="1">
    <location>
        <begin position="174"/>
        <end position="180"/>
    </location>
    <ligand>
        <name>sn-glycerol 1-phosphate</name>
        <dbReference type="ChEBI" id="CHEBI:57685"/>
    </ligand>
</feature>
<feature type="binding site" evidence="1">
    <location>
        <begin position="205"/>
        <end position="206"/>
    </location>
    <ligand>
        <name>sn-glycerol 1-phosphate</name>
        <dbReference type="ChEBI" id="CHEBI:57685"/>
    </ligand>
</feature>
<feature type="binding site" evidence="1">
    <location>
        <begin position="227"/>
        <end position="228"/>
    </location>
    <ligand>
        <name>sn-glycerol 1-phosphate</name>
        <dbReference type="ChEBI" id="CHEBI:57685"/>
    </ligand>
</feature>
<protein>
    <recommendedName>
        <fullName evidence="1">Geranylgeranylglyceryl phosphate synthase</fullName>
        <shortName evidence="1">GGGP synthase</shortName>
        <shortName evidence="1">GGGPS</shortName>
        <ecNumber evidence="1">2.5.1.41</ecNumber>
    </recommendedName>
    <alternativeName>
        <fullName evidence="1">(S)-3-O-geranylgeranylglyceryl phosphate synthase</fullName>
    </alternativeName>
    <alternativeName>
        <fullName evidence="1">Phosphoglycerol geranylgeranyltransferase</fullName>
    </alternativeName>
</protein>
<keyword id="KW-0963">Cytoplasm</keyword>
<keyword id="KW-0444">Lipid biosynthesis</keyword>
<keyword id="KW-0443">Lipid metabolism</keyword>
<keyword id="KW-0460">Magnesium</keyword>
<keyword id="KW-0479">Metal-binding</keyword>
<keyword id="KW-0594">Phospholipid biosynthesis</keyword>
<keyword id="KW-1208">Phospholipid metabolism</keyword>
<keyword id="KW-1185">Reference proteome</keyword>
<keyword id="KW-0808">Transferase</keyword>
<dbReference type="EC" id="2.5.1.41" evidence="1"/>
<dbReference type="EMBL" id="CP001463">
    <property type="protein sequence ID" value="ACS89748.1"/>
    <property type="molecule type" value="Genomic_DNA"/>
</dbReference>
<dbReference type="RefSeq" id="WP_015848968.1">
    <property type="nucleotide sequence ID" value="NC_012883.1"/>
</dbReference>
<dbReference type="SMR" id="C6A2A3"/>
<dbReference type="STRING" id="604354.TSIB_0683"/>
<dbReference type="GeneID" id="8095671"/>
<dbReference type="KEGG" id="tsi:TSIB_0683"/>
<dbReference type="eggNOG" id="arCOG01085">
    <property type="taxonomic scope" value="Archaea"/>
</dbReference>
<dbReference type="HOGENOM" id="CLU_068610_0_0_2"/>
<dbReference type="OrthoDB" id="7409at2157"/>
<dbReference type="UniPathway" id="UPA00940"/>
<dbReference type="Proteomes" id="UP000009079">
    <property type="component" value="Chromosome"/>
</dbReference>
<dbReference type="GO" id="GO:0005737">
    <property type="term" value="C:cytoplasm"/>
    <property type="evidence" value="ECO:0007669"/>
    <property type="project" value="UniProtKB-SubCell"/>
</dbReference>
<dbReference type="GO" id="GO:0000107">
    <property type="term" value="F:imidazoleglycerol-phosphate synthase activity"/>
    <property type="evidence" value="ECO:0007669"/>
    <property type="project" value="TreeGrafter"/>
</dbReference>
<dbReference type="GO" id="GO:0000287">
    <property type="term" value="F:magnesium ion binding"/>
    <property type="evidence" value="ECO:0007669"/>
    <property type="project" value="UniProtKB-UniRule"/>
</dbReference>
<dbReference type="GO" id="GO:0047294">
    <property type="term" value="F:phosphoglycerol geranylgeranyltransferase activity"/>
    <property type="evidence" value="ECO:0007669"/>
    <property type="project" value="UniProtKB-UniRule"/>
</dbReference>
<dbReference type="GO" id="GO:0046474">
    <property type="term" value="P:glycerophospholipid biosynthetic process"/>
    <property type="evidence" value="ECO:0007669"/>
    <property type="project" value="UniProtKB-UniRule"/>
</dbReference>
<dbReference type="CDD" id="cd02812">
    <property type="entry name" value="PcrB_like"/>
    <property type="match status" value="1"/>
</dbReference>
<dbReference type="FunFam" id="3.20.20.390:FF:000001">
    <property type="entry name" value="Heptaprenylglyceryl phosphate synthase"/>
    <property type="match status" value="1"/>
</dbReference>
<dbReference type="Gene3D" id="3.20.20.390">
    <property type="entry name" value="FMN-linked oxidoreductases"/>
    <property type="match status" value="1"/>
</dbReference>
<dbReference type="HAMAP" id="MF_00112">
    <property type="entry name" value="GGGP_HepGP_synthase"/>
    <property type="match status" value="1"/>
</dbReference>
<dbReference type="InterPro" id="IPR038597">
    <property type="entry name" value="GGGP/HepGP_synthase_sf"/>
</dbReference>
<dbReference type="InterPro" id="IPR008205">
    <property type="entry name" value="GGGP_HepGP_synthase"/>
</dbReference>
<dbReference type="InterPro" id="IPR010946">
    <property type="entry name" value="GGGP_synth"/>
</dbReference>
<dbReference type="InterPro" id="IPR050064">
    <property type="entry name" value="IGPS_HisA/HisF"/>
</dbReference>
<dbReference type="NCBIfam" id="TIGR01769">
    <property type="entry name" value="GGGP"/>
    <property type="match status" value="1"/>
</dbReference>
<dbReference type="NCBIfam" id="TIGR01768">
    <property type="entry name" value="GGGP-family"/>
    <property type="match status" value="1"/>
</dbReference>
<dbReference type="NCBIfam" id="NF003198">
    <property type="entry name" value="PRK04169.1-2"/>
    <property type="match status" value="1"/>
</dbReference>
<dbReference type="PANTHER" id="PTHR21235:SF22">
    <property type="entry name" value="GERANYLGERANYLGLYCERYL PHOSPHATE SYNTHASE"/>
    <property type="match status" value="1"/>
</dbReference>
<dbReference type="PANTHER" id="PTHR21235">
    <property type="entry name" value="IMIDAZOLE GLYCEROL PHOSPHATE SYNTHASE SUBUNIT HISF/H IGP SYNTHASE SUBUNIT HISF/H"/>
    <property type="match status" value="1"/>
</dbReference>
<dbReference type="Pfam" id="PF01884">
    <property type="entry name" value="PcrB"/>
    <property type="match status" value="1"/>
</dbReference>
<dbReference type="SUPFAM" id="SSF51395">
    <property type="entry name" value="FMN-linked oxidoreductases"/>
    <property type="match status" value="1"/>
</dbReference>
<proteinExistence type="inferred from homology"/>
<reference key="1">
    <citation type="journal article" date="2009" name="Appl. Environ. Microbiol.">
        <title>Metabolic versatility and indigenous origin of the archaeon Thermococcus sibiricus, isolated from a siberian oil reservoir, as revealed by genome analysis.</title>
        <authorList>
            <person name="Mardanov A.V."/>
            <person name="Ravin N.V."/>
            <person name="Svetlitchnyi V.A."/>
            <person name="Beletsky A.V."/>
            <person name="Miroshnichenko M.L."/>
            <person name="Bonch-Osmolovskaya E.A."/>
            <person name="Skryabin K.G."/>
        </authorList>
    </citation>
    <scope>NUCLEOTIDE SEQUENCE [LARGE SCALE GENOMIC DNA]</scope>
    <source>
        <strain>DSM 12597 / MM 739</strain>
    </source>
</reference>
<accession>C6A2A3</accession>
<organism>
    <name type="scientific">Thermococcus sibiricus (strain DSM 12597 / MM 739)</name>
    <dbReference type="NCBI Taxonomy" id="604354"/>
    <lineage>
        <taxon>Archaea</taxon>
        <taxon>Methanobacteriati</taxon>
        <taxon>Methanobacteriota</taxon>
        <taxon>Thermococci</taxon>
        <taxon>Thermococcales</taxon>
        <taxon>Thermococcaceae</taxon>
        <taxon>Thermococcus</taxon>
    </lineage>
</organism>
<gene>
    <name type="ordered locus">TSIB_0683</name>
</gene>
<sequence>MLKIGKVESYIHEKLKEEKLHFVLLDPEDVSPRLASKLAKISEEVGVDAIMVGGSTGAEGEVLDGVVKAIKENSSLPVILFPGSHGGLSKYADAVFFMSLLNSRNPFFIAGAQALGAFRVKHYGIEPIPMAYLVVEPGETAGWVSDANLIPRHKPKIAAAYALAGQYMGMRLVYLEAGSGAPEHIPNEMIKVVKSAIDVPLIVGGGIRTYEDAKEVVQSGADIIVTGTAIEKAGSLEESKKRLESIINGVKEVSP</sequence>
<comment type="function">
    <text evidence="1">Prenyltransferase that catalyzes the transfer of the geranylgeranyl moiety of geranylgeranyl diphosphate (GGPP) to the C3 hydroxyl of sn-glycerol-1-phosphate (G1P). This reaction is the first ether-bond-formation step in the biosynthesis of archaeal membrane lipids.</text>
</comment>
<comment type="catalytic activity">
    <reaction evidence="1">
        <text>sn-glycerol 1-phosphate + (2E,6E,10E)-geranylgeranyl diphosphate = sn-3-O-(geranylgeranyl)glycerol 1-phosphate + diphosphate</text>
        <dbReference type="Rhea" id="RHEA:23404"/>
        <dbReference type="ChEBI" id="CHEBI:33019"/>
        <dbReference type="ChEBI" id="CHEBI:57677"/>
        <dbReference type="ChEBI" id="CHEBI:57685"/>
        <dbReference type="ChEBI" id="CHEBI:58756"/>
        <dbReference type="EC" id="2.5.1.41"/>
    </reaction>
</comment>
<comment type="cofactor">
    <cofactor evidence="1">
        <name>Mg(2+)</name>
        <dbReference type="ChEBI" id="CHEBI:18420"/>
    </cofactor>
</comment>
<comment type="pathway">
    <text evidence="1">Membrane lipid metabolism; glycerophospholipid metabolism.</text>
</comment>
<comment type="subcellular location">
    <subcellularLocation>
        <location evidence="1">Cytoplasm</location>
    </subcellularLocation>
</comment>
<comment type="similarity">
    <text evidence="1">Belongs to the GGGP/HepGP synthase family. Group II subfamily.</text>
</comment>